<protein>
    <recommendedName>
        <fullName evidence="1">DNA mismatch repair protein MutL</fullName>
    </recommendedName>
</protein>
<feature type="chain" id="PRO_1000096677" description="DNA mismatch repair protein MutL">
    <location>
        <begin position="1"/>
        <end position="600"/>
    </location>
</feature>
<feature type="region of interest" description="Disordered" evidence="2">
    <location>
        <begin position="348"/>
        <end position="375"/>
    </location>
</feature>
<feature type="compositionally biased region" description="Polar residues" evidence="2">
    <location>
        <begin position="349"/>
        <end position="362"/>
    </location>
</feature>
<accession>B5ZS00</accession>
<proteinExistence type="inferred from homology"/>
<reference key="1">
    <citation type="journal article" date="2010" name="Stand. Genomic Sci.">
        <title>Complete genome sequence of Rhizobium leguminosarum bv trifolii strain WSM2304, an effective microsymbiont of the South American clover Trifolium polymorphum.</title>
        <authorList>
            <person name="Reeve W."/>
            <person name="O'Hara G."/>
            <person name="Chain P."/>
            <person name="Ardley J."/>
            <person name="Brau L."/>
            <person name="Nandesena K."/>
            <person name="Tiwari R."/>
            <person name="Malfatti S."/>
            <person name="Kiss H."/>
            <person name="Lapidus A."/>
            <person name="Copeland A."/>
            <person name="Nolan M."/>
            <person name="Land M."/>
            <person name="Ivanova N."/>
            <person name="Mavromatis K."/>
            <person name="Markowitz V."/>
            <person name="Kyrpides N."/>
            <person name="Melino V."/>
            <person name="Denton M."/>
            <person name="Yates R."/>
            <person name="Howieson J."/>
        </authorList>
    </citation>
    <scope>NUCLEOTIDE SEQUENCE [LARGE SCALE GENOMIC DNA]</scope>
    <source>
        <strain>WSM2304</strain>
    </source>
</reference>
<comment type="function">
    <text evidence="1">This protein is involved in the repair of mismatches in DNA. It is required for dam-dependent methyl-directed DNA mismatch repair. May act as a 'molecular matchmaker', a protein that promotes the formation of a stable complex between two or more DNA-binding proteins in an ATP-dependent manner without itself being part of a final effector complex.</text>
</comment>
<comment type="similarity">
    <text evidence="1">Belongs to the DNA mismatch repair MutL/HexB family.</text>
</comment>
<dbReference type="EMBL" id="CP001191">
    <property type="protein sequence ID" value="ACI53793.1"/>
    <property type="molecule type" value="Genomic_DNA"/>
</dbReference>
<dbReference type="RefSeq" id="WP_012556733.1">
    <property type="nucleotide sequence ID" value="NC_011369.1"/>
</dbReference>
<dbReference type="SMR" id="B5ZS00"/>
<dbReference type="STRING" id="395492.Rleg2_0496"/>
<dbReference type="KEGG" id="rlt:Rleg2_0496"/>
<dbReference type="eggNOG" id="COG0323">
    <property type="taxonomic scope" value="Bacteria"/>
</dbReference>
<dbReference type="HOGENOM" id="CLU_004131_4_2_5"/>
<dbReference type="Proteomes" id="UP000008330">
    <property type="component" value="Chromosome"/>
</dbReference>
<dbReference type="GO" id="GO:0032300">
    <property type="term" value="C:mismatch repair complex"/>
    <property type="evidence" value="ECO:0007669"/>
    <property type="project" value="InterPro"/>
</dbReference>
<dbReference type="GO" id="GO:0005524">
    <property type="term" value="F:ATP binding"/>
    <property type="evidence" value="ECO:0007669"/>
    <property type="project" value="InterPro"/>
</dbReference>
<dbReference type="GO" id="GO:0016887">
    <property type="term" value="F:ATP hydrolysis activity"/>
    <property type="evidence" value="ECO:0007669"/>
    <property type="project" value="InterPro"/>
</dbReference>
<dbReference type="GO" id="GO:0140664">
    <property type="term" value="F:ATP-dependent DNA damage sensor activity"/>
    <property type="evidence" value="ECO:0007669"/>
    <property type="project" value="InterPro"/>
</dbReference>
<dbReference type="GO" id="GO:0030983">
    <property type="term" value="F:mismatched DNA binding"/>
    <property type="evidence" value="ECO:0007669"/>
    <property type="project" value="InterPro"/>
</dbReference>
<dbReference type="GO" id="GO:0006298">
    <property type="term" value="P:mismatch repair"/>
    <property type="evidence" value="ECO:0007669"/>
    <property type="project" value="UniProtKB-UniRule"/>
</dbReference>
<dbReference type="CDD" id="cd16926">
    <property type="entry name" value="HATPase_MutL-MLH-PMS-like"/>
    <property type="match status" value="1"/>
</dbReference>
<dbReference type="CDD" id="cd00782">
    <property type="entry name" value="MutL_Trans"/>
    <property type="match status" value="1"/>
</dbReference>
<dbReference type="FunFam" id="3.30.565.10:FF:000003">
    <property type="entry name" value="DNA mismatch repair endonuclease MutL"/>
    <property type="match status" value="1"/>
</dbReference>
<dbReference type="Gene3D" id="3.30.230.10">
    <property type="match status" value="1"/>
</dbReference>
<dbReference type="Gene3D" id="3.30.565.10">
    <property type="entry name" value="Histidine kinase-like ATPase, C-terminal domain"/>
    <property type="match status" value="1"/>
</dbReference>
<dbReference type="Gene3D" id="3.30.1540.20">
    <property type="entry name" value="MutL, C-terminal domain, dimerisation subdomain"/>
    <property type="match status" value="1"/>
</dbReference>
<dbReference type="Gene3D" id="3.30.1370.100">
    <property type="entry name" value="MutL, C-terminal domain, regulatory subdomain"/>
    <property type="match status" value="1"/>
</dbReference>
<dbReference type="HAMAP" id="MF_00149">
    <property type="entry name" value="DNA_mis_repair"/>
    <property type="match status" value="1"/>
</dbReference>
<dbReference type="InterPro" id="IPR014762">
    <property type="entry name" value="DNA_mismatch_repair_CS"/>
</dbReference>
<dbReference type="InterPro" id="IPR020667">
    <property type="entry name" value="DNA_mismatch_repair_MutL"/>
</dbReference>
<dbReference type="InterPro" id="IPR013507">
    <property type="entry name" value="DNA_mismatch_S5_2-like"/>
</dbReference>
<dbReference type="InterPro" id="IPR036890">
    <property type="entry name" value="HATPase_C_sf"/>
</dbReference>
<dbReference type="InterPro" id="IPR002099">
    <property type="entry name" value="MutL/Mlh/PMS"/>
</dbReference>
<dbReference type="InterPro" id="IPR038973">
    <property type="entry name" value="MutL/Mlh/Pms-like"/>
</dbReference>
<dbReference type="InterPro" id="IPR014790">
    <property type="entry name" value="MutL_C"/>
</dbReference>
<dbReference type="InterPro" id="IPR042120">
    <property type="entry name" value="MutL_C_dimsub"/>
</dbReference>
<dbReference type="InterPro" id="IPR042121">
    <property type="entry name" value="MutL_C_regsub"/>
</dbReference>
<dbReference type="InterPro" id="IPR037198">
    <property type="entry name" value="MutL_C_sf"/>
</dbReference>
<dbReference type="InterPro" id="IPR020568">
    <property type="entry name" value="Ribosomal_Su5_D2-typ_SF"/>
</dbReference>
<dbReference type="InterPro" id="IPR014721">
    <property type="entry name" value="Ribsml_uS5_D2-typ_fold_subgr"/>
</dbReference>
<dbReference type="NCBIfam" id="TIGR00585">
    <property type="entry name" value="mutl"/>
    <property type="match status" value="1"/>
</dbReference>
<dbReference type="NCBIfam" id="NF000953">
    <property type="entry name" value="PRK00095.2-4"/>
    <property type="match status" value="1"/>
</dbReference>
<dbReference type="PANTHER" id="PTHR10073">
    <property type="entry name" value="DNA MISMATCH REPAIR PROTEIN MLH, PMS, MUTL"/>
    <property type="match status" value="1"/>
</dbReference>
<dbReference type="PANTHER" id="PTHR10073:SF12">
    <property type="entry name" value="DNA MISMATCH REPAIR PROTEIN MLH1"/>
    <property type="match status" value="1"/>
</dbReference>
<dbReference type="Pfam" id="PF01119">
    <property type="entry name" value="DNA_mis_repair"/>
    <property type="match status" value="1"/>
</dbReference>
<dbReference type="Pfam" id="PF13589">
    <property type="entry name" value="HATPase_c_3"/>
    <property type="match status" value="1"/>
</dbReference>
<dbReference type="Pfam" id="PF08676">
    <property type="entry name" value="MutL_C"/>
    <property type="match status" value="1"/>
</dbReference>
<dbReference type="SMART" id="SM01340">
    <property type="entry name" value="DNA_mis_repair"/>
    <property type="match status" value="1"/>
</dbReference>
<dbReference type="SMART" id="SM00853">
    <property type="entry name" value="MutL_C"/>
    <property type="match status" value="1"/>
</dbReference>
<dbReference type="SUPFAM" id="SSF55874">
    <property type="entry name" value="ATPase domain of HSP90 chaperone/DNA topoisomerase II/histidine kinase"/>
    <property type="match status" value="1"/>
</dbReference>
<dbReference type="SUPFAM" id="SSF118116">
    <property type="entry name" value="DNA mismatch repair protein MutL"/>
    <property type="match status" value="1"/>
</dbReference>
<dbReference type="SUPFAM" id="SSF54211">
    <property type="entry name" value="Ribosomal protein S5 domain 2-like"/>
    <property type="match status" value="1"/>
</dbReference>
<dbReference type="PROSITE" id="PS00058">
    <property type="entry name" value="DNA_MISMATCH_REPAIR_1"/>
    <property type="match status" value="1"/>
</dbReference>
<sequence>MAIRQLSETLINQIAAGEVIERPASAAKELIENALDAGATRIEIATAGGGKALLRVSDNGSGMDAADLELAVRRHCTSKLSETLEDIRTLGFRGEALPSIGSVARLSIASRRRDSAGGHEIAVNAGKVAHLRPAAANPGTIVEVRDLFFATPARLKFLKTEKAEAGAITEIVKRMAIAFPAVRFVLSGSDRTTLEFPATGDDHLARMAQVLGKDFRDNAIALDAVREEISLTGFAGVPTFNRGNSAHQYAFVNGRPVQDKLILSAIRGAYAETIPSGRHPVAVLSITLDPALVDVNVHPAKSDVRFRDPGLVRGLIVGAIREALARDGSRAATTGASDMLRSFRPGFQPQAQRPQTAWSAETSPFRPYQPTTGFSERPQASFDGLSMPTARAEPPFSPQPAAADTTARYPLGAARAQIHANYIVAQTEDGLVIVDQHAAHERLVFEAMRKALHSKRLASQVLLIPEIVDIPEEDCDRLMQHAAELAELGLAIERFGPGAIAVRETPAMLGEVDAHGLIRQLADEIAEWDTASGLSAKLEYVAATMACHGSVRSGRRLRPEEMNALLREMEVTPGSGQCNHGRPTYIELKLSDIERLFGRS</sequence>
<organism>
    <name type="scientific">Rhizobium leguminosarum bv. trifolii (strain WSM2304)</name>
    <dbReference type="NCBI Taxonomy" id="395492"/>
    <lineage>
        <taxon>Bacteria</taxon>
        <taxon>Pseudomonadati</taxon>
        <taxon>Pseudomonadota</taxon>
        <taxon>Alphaproteobacteria</taxon>
        <taxon>Hyphomicrobiales</taxon>
        <taxon>Rhizobiaceae</taxon>
        <taxon>Rhizobium/Agrobacterium group</taxon>
        <taxon>Rhizobium</taxon>
    </lineage>
</organism>
<name>MUTL_RHILW</name>
<keyword id="KW-0227">DNA damage</keyword>
<keyword id="KW-0234">DNA repair</keyword>
<keyword id="KW-1185">Reference proteome</keyword>
<gene>
    <name evidence="1" type="primary">mutL</name>
    <name type="ordered locus">Rleg2_0496</name>
</gene>
<evidence type="ECO:0000255" key="1">
    <source>
        <dbReference type="HAMAP-Rule" id="MF_00149"/>
    </source>
</evidence>
<evidence type="ECO:0000256" key="2">
    <source>
        <dbReference type="SAM" id="MobiDB-lite"/>
    </source>
</evidence>